<feature type="chain" id="PRO_0000139109" description="Methionine--tRNA ligase">
    <location>
        <begin position="1"/>
        <end position="692"/>
    </location>
</feature>
<feature type="domain" description="tRNA-binding" evidence="1">
    <location>
        <begin position="586"/>
        <end position="692"/>
    </location>
</feature>
<feature type="short sequence motif" description="'HIGH' region">
    <location>
        <begin position="12"/>
        <end position="22"/>
    </location>
</feature>
<feature type="short sequence motif" description="'KMSKS' region">
    <location>
        <begin position="341"/>
        <end position="345"/>
    </location>
</feature>
<feature type="binding site" evidence="1">
    <location>
        <position position="143"/>
    </location>
    <ligand>
        <name>Zn(2+)</name>
        <dbReference type="ChEBI" id="CHEBI:29105"/>
    </ligand>
</feature>
<feature type="binding site" evidence="1">
    <location>
        <position position="146"/>
    </location>
    <ligand>
        <name>Zn(2+)</name>
        <dbReference type="ChEBI" id="CHEBI:29105"/>
    </ligand>
</feature>
<feature type="binding site" evidence="1">
    <location>
        <position position="156"/>
    </location>
    <ligand>
        <name>Zn(2+)</name>
        <dbReference type="ChEBI" id="CHEBI:29105"/>
    </ligand>
</feature>
<feature type="binding site" evidence="1">
    <location>
        <position position="159"/>
    </location>
    <ligand>
        <name>Zn(2+)</name>
        <dbReference type="ChEBI" id="CHEBI:29105"/>
    </ligand>
</feature>
<feature type="binding site" evidence="1">
    <location>
        <position position="344"/>
    </location>
    <ligand>
        <name>ATP</name>
        <dbReference type="ChEBI" id="CHEBI:30616"/>
    </ligand>
</feature>
<name>SYM_BORPA</name>
<gene>
    <name evidence="1" type="primary">metG</name>
    <name type="ordered locus">BPP0755</name>
</gene>
<organism>
    <name type="scientific">Bordetella parapertussis (strain 12822 / ATCC BAA-587 / NCTC 13253)</name>
    <dbReference type="NCBI Taxonomy" id="257311"/>
    <lineage>
        <taxon>Bacteria</taxon>
        <taxon>Pseudomonadati</taxon>
        <taxon>Pseudomonadota</taxon>
        <taxon>Betaproteobacteria</taxon>
        <taxon>Burkholderiales</taxon>
        <taxon>Alcaligenaceae</taxon>
        <taxon>Bordetella</taxon>
    </lineage>
</organism>
<protein>
    <recommendedName>
        <fullName evidence="1">Methionine--tRNA ligase</fullName>
        <ecNumber evidence="1">6.1.1.10</ecNumber>
    </recommendedName>
    <alternativeName>
        <fullName evidence="1">Methionyl-tRNA synthetase</fullName>
        <shortName evidence="1">MetRS</shortName>
    </alternativeName>
</protein>
<sequence>MSRTLFVTTALPYANGSFHIGHIMEYIQADIWVRSMRMAGHTVHFVGADDAHGAPIMLKAEKEGITPQALVARYAAERPRYLDGFHIRFDHWHSTDTPENVALSQEIYRALKSEGLIETRSIEQFYDPVKGMFLADRYIKGECPRCHAKDQYGDSCEVCGAVYAPTELINPYSALTGAAPVLKSSDHFFFKLSDPRCVEFLQQWTTGANRQGVKHLQAEVQAKTREWLGGDDGEAKLGDWDISRDAPYFGIEIPDAPGKYFYVWLDAPVGYLASLKSYCAAKGLDFDALLDPAGPTEQVHFIGKDIIYFHALFWPAMLKFAGRKTPDQLNVHGFITVSGEKMSKSRGTGISPLRYLEIGMDAEWLRYYMAAKLNARVEDMDFNPEDFVARVNSDLVGKYVNIASRAAAFITRHFDGELAYDGDTDALAAEFAQQAESIRAAFEAREYNRAVREIMAHADRINQAFDAAQPWVMAKGIGAADAATRARLQDICSRALAGFKALSVMLAPVLPALASRVARELFGANADFAWGDAQQLPQRVAPFKHLMQRVDPKLLDDLFEPPAAEASAPAALPGGEALADTITIDDFAKIDLRIARIVNCEEVEGSTKLLRLTLDVGEGRHRNVFSGIKSAYQPQDLVGKLTVLVANLAPRKMKFGVSEGMVLAASHADEKAEPGIYVLEPWPGAQPGMRVR</sequence>
<dbReference type="EC" id="6.1.1.10" evidence="1"/>
<dbReference type="EMBL" id="BX640425">
    <property type="protein sequence ID" value="CAE40164.1"/>
    <property type="molecule type" value="Genomic_DNA"/>
</dbReference>
<dbReference type="RefSeq" id="WP_003808372.1">
    <property type="nucleotide sequence ID" value="NC_002928.3"/>
</dbReference>
<dbReference type="SMR" id="Q7W1D8"/>
<dbReference type="GeneID" id="93202505"/>
<dbReference type="KEGG" id="bpa:BPP0755"/>
<dbReference type="HOGENOM" id="CLU_009710_7_0_4"/>
<dbReference type="Proteomes" id="UP000001421">
    <property type="component" value="Chromosome"/>
</dbReference>
<dbReference type="GO" id="GO:0005829">
    <property type="term" value="C:cytosol"/>
    <property type="evidence" value="ECO:0007669"/>
    <property type="project" value="TreeGrafter"/>
</dbReference>
<dbReference type="GO" id="GO:0005524">
    <property type="term" value="F:ATP binding"/>
    <property type="evidence" value="ECO:0007669"/>
    <property type="project" value="UniProtKB-UniRule"/>
</dbReference>
<dbReference type="GO" id="GO:0046872">
    <property type="term" value="F:metal ion binding"/>
    <property type="evidence" value="ECO:0007669"/>
    <property type="project" value="UniProtKB-KW"/>
</dbReference>
<dbReference type="GO" id="GO:0004825">
    <property type="term" value="F:methionine-tRNA ligase activity"/>
    <property type="evidence" value="ECO:0007669"/>
    <property type="project" value="UniProtKB-UniRule"/>
</dbReference>
<dbReference type="GO" id="GO:0000049">
    <property type="term" value="F:tRNA binding"/>
    <property type="evidence" value="ECO:0007669"/>
    <property type="project" value="UniProtKB-KW"/>
</dbReference>
<dbReference type="GO" id="GO:0006431">
    <property type="term" value="P:methionyl-tRNA aminoacylation"/>
    <property type="evidence" value="ECO:0007669"/>
    <property type="project" value="UniProtKB-UniRule"/>
</dbReference>
<dbReference type="CDD" id="cd07957">
    <property type="entry name" value="Anticodon_Ia_Met"/>
    <property type="match status" value="1"/>
</dbReference>
<dbReference type="CDD" id="cd00814">
    <property type="entry name" value="MetRS_core"/>
    <property type="match status" value="1"/>
</dbReference>
<dbReference type="CDD" id="cd02800">
    <property type="entry name" value="tRNA_bind_EcMetRS_like"/>
    <property type="match status" value="1"/>
</dbReference>
<dbReference type="FunFam" id="2.20.28.20:FF:000001">
    <property type="entry name" value="Methionine--tRNA ligase"/>
    <property type="match status" value="1"/>
</dbReference>
<dbReference type="FunFam" id="2.40.50.140:FF:000042">
    <property type="entry name" value="Methionine--tRNA ligase"/>
    <property type="match status" value="1"/>
</dbReference>
<dbReference type="Gene3D" id="3.40.50.620">
    <property type="entry name" value="HUPs"/>
    <property type="match status" value="1"/>
</dbReference>
<dbReference type="Gene3D" id="1.10.730.10">
    <property type="entry name" value="Isoleucyl-tRNA Synthetase, Domain 1"/>
    <property type="match status" value="1"/>
</dbReference>
<dbReference type="Gene3D" id="2.20.28.20">
    <property type="entry name" value="Methionyl-tRNA synthetase, Zn-domain"/>
    <property type="match status" value="1"/>
</dbReference>
<dbReference type="Gene3D" id="2.40.50.140">
    <property type="entry name" value="Nucleic acid-binding proteins"/>
    <property type="match status" value="1"/>
</dbReference>
<dbReference type="HAMAP" id="MF_00098">
    <property type="entry name" value="Met_tRNA_synth_type1"/>
    <property type="match status" value="1"/>
</dbReference>
<dbReference type="InterPro" id="IPR001412">
    <property type="entry name" value="aa-tRNA-synth_I_CS"/>
</dbReference>
<dbReference type="InterPro" id="IPR041872">
    <property type="entry name" value="Anticodon_Met"/>
</dbReference>
<dbReference type="InterPro" id="IPR004495">
    <property type="entry name" value="Met-tRNA-synth_bsu_C"/>
</dbReference>
<dbReference type="InterPro" id="IPR023458">
    <property type="entry name" value="Met-tRNA_ligase_1"/>
</dbReference>
<dbReference type="InterPro" id="IPR014758">
    <property type="entry name" value="Met-tRNA_synth"/>
</dbReference>
<dbReference type="InterPro" id="IPR015413">
    <property type="entry name" value="Methionyl/Leucyl_tRNA_Synth"/>
</dbReference>
<dbReference type="InterPro" id="IPR033911">
    <property type="entry name" value="MetRS_core"/>
</dbReference>
<dbReference type="InterPro" id="IPR029038">
    <property type="entry name" value="MetRS_Zn"/>
</dbReference>
<dbReference type="InterPro" id="IPR012340">
    <property type="entry name" value="NA-bd_OB-fold"/>
</dbReference>
<dbReference type="InterPro" id="IPR014729">
    <property type="entry name" value="Rossmann-like_a/b/a_fold"/>
</dbReference>
<dbReference type="InterPro" id="IPR002547">
    <property type="entry name" value="tRNA-bd_dom"/>
</dbReference>
<dbReference type="InterPro" id="IPR009080">
    <property type="entry name" value="tRNAsynth_Ia_anticodon-bd"/>
</dbReference>
<dbReference type="NCBIfam" id="TIGR00398">
    <property type="entry name" value="metG"/>
    <property type="match status" value="1"/>
</dbReference>
<dbReference type="NCBIfam" id="TIGR00399">
    <property type="entry name" value="metG_C_term"/>
    <property type="match status" value="1"/>
</dbReference>
<dbReference type="NCBIfam" id="NF001100">
    <property type="entry name" value="PRK00133.1"/>
    <property type="match status" value="1"/>
</dbReference>
<dbReference type="PANTHER" id="PTHR45765">
    <property type="entry name" value="METHIONINE--TRNA LIGASE"/>
    <property type="match status" value="1"/>
</dbReference>
<dbReference type="PANTHER" id="PTHR45765:SF1">
    <property type="entry name" value="METHIONINE--TRNA LIGASE, CYTOPLASMIC"/>
    <property type="match status" value="1"/>
</dbReference>
<dbReference type="Pfam" id="PF09334">
    <property type="entry name" value="tRNA-synt_1g"/>
    <property type="match status" value="1"/>
</dbReference>
<dbReference type="Pfam" id="PF01588">
    <property type="entry name" value="tRNA_bind"/>
    <property type="match status" value="1"/>
</dbReference>
<dbReference type="PRINTS" id="PR01041">
    <property type="entry name" value="TRNASYNTHMET"/>
</dbReference>
<dbReference type="SUPFAM" id="SSF47323">
    <property type="entry name" value="Anticodon-binding domain of a subclass of class I aminoacyl-tRNA synthetases"/>
    <property type="match status" value="1"/>
</dbReference>
<dbReference type="SUPFAM" id="SSF57770">
    <property type="entry name" value="Methionyl-tRNA synthetase (MetRS), Zn-domain"/>
    <property type="match status" value="1"/>
</dbReference>
<dbReference type="SUPFAM" id="SSF50249">
    <property type="entry name" value="Nucleic acid-binding proteins"/>
    <property type="match status" value="1"/>
</dbReference>
<dbReference type="SUPFAM" id="SSF52374">
    <property type="entry name" value="Nucleotidylyl transferase"/>
    <property type="match status" value="1"/>
</dbReference>
<dbReference type="PROSITE" id="PS00178">
    <property type="entry name" value="AA_TRNA_LIGASE_I"/>
    <property type="match status" value="1"/>
</dbReference>
<dbReference type="PROSITE" id="PS50886">
    <property type="entry name" value="TRBD"/>
    <property type="match status" value="1"/>
</dbReference>
<evidence type="ECO:0000255" key="1">
    <source>
        <dbReference type="HAMAP-Rule" id="MF_00098"/>
    </source>
</evidence>
<proteinExistence type="inferred from homology"/>
<comment type="function">
    <text evidence="1">Is required not only for elongation of protein synthesis but also for the initiation of all mRNA translation through initiator tRNA(fMet) aminoacylation.</text>
</comment>
<comment type="catalytic activity">
    <reaction evidence="1">
        <text>tRNA(Met) + L-methionine + ATP = L-methionyl-tRNA(Met) + AMP + diphosphate</text>
        <dbReference type="Rhea" id="RHEA:13481"/>
        <dbReference type="Rhea" id="RHEA-COMP:9667"/>
        <dbReference type="Rhea" id="RHEA-COMP:9698"/>
        <dbReference type="ChEBI" id="CHEBI:30616"/>
        <dbReference type="ChEBI" id="CHEBI:33019"/>
        <dbReference type="ChEBI" id="CHEBI:57844"/>
        <dbReference type="ChEBI" id="CHEBI:78442"/>
        <dbReference type="ChEBI" id="CHEBI:78530"/>
        <dbReference type="ChEBI" id="CHEBI:456215"/>
        <dbReference type="EC" id="6.1.1.10"/>
    </reaction>
</comment>
<comment type="cofactor">
    <cofactor evidence="1">
        <name>Zn(2+)</name>
        <dbReference type="ChEBI" id="CHEBI:29105"/>
    </cofactor>
    <text evidence="1">Binds 1 zinc ion per subunit.</text>
</comment>
<comment type="subunit">
    <text evidence="1">Homodimer.</text>
</comment>
<comment type="subcellular location">
    <subcellularLocation>
        <location evidence="1">Cytoplasm</location>
    </subcellularLocation>
</comment>
<comment type="similarity">
    <text evidence="1">Belongs to the class-I aminoacyl-tRNA synthetase family. MetG type 1 subfamily.</text>
</comment>
<keyword id="KW-0030">Aminoacyl-tRNA synthetase</keyword>
<keyword id="KW-0067">ATP-binding</keyword>
<keyword id="KW-0963">Cytoplasm</keyword>
<keyword id="KW-0436">Ligase</keyword>
<keyword id="KW-0479">Metal-binding</keyword>
<keyword id="KW-0547">Nucleotide-binding</keyword>
<keyword id="KW-0648">Protein biosynthesis</keyword>
<keyword id="KW-0694">RNA-binding</keyword>
<keyword id="KW-0820">tRNA-binding</keyword>
<keyword id="KW-0862">Zinc</keyword>
<accession>Q7W1D8</accession>
<reference key="1">
    <citation type="journal article" date="2003" name="Nat. Genet.">
        <title>Comparative analysis of the genome sequences of Bordetella pertussis, Bordetella parapertussis and Bordetella bronchiseptica.</title>
        <authorList>
            <person name="Parkhill J."/>
            <person name="Sebaihia M."/>
            <person name="Preston A."/>
            <person name="Murphy L.D."/>
            <person name="Thomson N.R."/>
            <person name="Harris D.E."/>
            <person name="Holden M.T.G."/>
            <person name="Churcher C.M."/>
            <person name="Bentley S.D."/>
            <person name="Mungall K.L."/>
            <person name="Cerdeno-Tarraga A.-M."/>
            <person name="Temple L."/>
            <person name="James K.D."/>
            <person name="Harris B."/>
            <person name="Quail M.A."/>
            <person name="Achtman M."/>
            <person name="Atkin R."/>
            <person name="Baker S."/>
            <person name="Basham D."/>
            <person name="Bason N."/>
            <person name="Cherevach I."/>
            <person name="Chillingworth T."/>
            <person name="Collins M."/>
            <person name="Cronin A."/>
            <person name="Davis P."/>
            <person name="Doggett J."/>
            <person name="Feltwell T."/>
            <person name="Goble A."/>
            <person name="Hamlin N."/>
            <person name="Hauser H."/>
            <person name="Holroyd S."/>
            <person name="Jagels K."/>
            <person name="Leather S."/>
            <person name="Moule S."/>
            <person name="Norberczak H."/>
            <person name="O'Neil S."/>
            <person name="Ormond D."/>
            <person name="Price C."/>
            <person name="Rabbinowitsch E."/>
            <person name="Rutter S."/>
            <person name="Sanders M."/>
            <person name="Saunders D."/>
            <person name="Seeger K."/>
            <person name="Sharp S."/>
            <person name="Simmonds M."/>
            <person name="Skelton J."/>
            <person name="Squares R."/>
            <person name="Squares S."/>
            <person name="Stevens K."/>
            <person name="Unwin L."/>
            <person name="Whitehead S."/>
            <person name="Barrell B.G."/>
            <person name="Maskell D.J."/>
        </authorList>
    </citation>
    <scope>NUCLEOTIDE SEQUENCE [LARGE SCALE GENOMIC DNA]</scope>
    <source>
        <strain>12822 / ATCC BAA-587 / NCTC 13253</strain>
    </source>
</reference>